<protein>
    <recommendedName>
        <fullName evidence="1">Disulfide bond formation protein B</fullName>
    </recommendedName>
    <alternativeName>
        <fullName evidence="1">Disulfide oxidoreductase</fullName>
    </alternativeName>
</protein>
<dbReference type="EMBL" id="CP000352">
    <property type="protein sequence ID" value="ABF08286.1"/>
    <property type="molecule type" value="Genomic_DNA"/>
</dbReference>
<dbReference type="RefSeq" id="WP_008649101.1">
    <property type="nucleotide sequence ID" value="NC_007973.1"/>
</dbReference>
<dbReference type="SMR" id="Q1LNJ0"/>
<dbReference type="STRING" id="266264.Rmet_1403"/>
<dbReference type="KEGG" id="rme:Rmet_1403"/>
<dbReference type="eggNOG" id="COG1495">
    <property type="taxonomic scope" value="Bacteria"/>
</dbReference>
<dbReference type="HOGENOM" id="CLU_098660_1_0_4"/>
<dbReference type="Proteomes" id="UP000002429">
    <property type="component" value="Chromosome"/>
</dbReference>
<dbReference type="GO" id="GO:0005886">
    <property type="term" value="C:plasma membrane"/>
    <property type="evidence" value="ECO:0007669"/>
    <property type="project" value="UniProtKB-SubCell"/>
</dbReference>
<dbReference type="GO" id="GO:0009055">
    <property type="term" value="F:electron transfer activity"/>
    <property type="evidence" value="ECO:0007669"/>
    <property type="project" value="UniProtKB-UniRule"/>
</dbReference>
<dbReference type="GO" id="GO:0015035">
    <property type="term" value="F:protein-disulfide reductase activity"/>
    <property type="evidence" value="ECO:0007669"/>
    <property type="project" value="UniProtKB-UniRule"/>
</dbReference>
<dbReference type="GO" id="GO:0006457">
    <property type="term" value="P:protein folding"/>
    <property type="evidence" value="ECO:0007669"/>
    <property type="project" value="InterPro"/>
</dbReference>
<dbReference type="Gene3D" id="1.20.1550.10">
    <property type="entry name" value="DsbB-like"/>
    <property type="match status" value="1"/>
</dbReference>
<dbReference type="HAMAP" id="MF_00286">
    <property type="entry name" value="DsbB"/>
    <property type="match status" value="1"/>
</dbReference>
<dbReference type="InterPro" id="IPR003752">
    <property type="entry name" value="DiS_bond_form_DsbB/BdbC"/>
</dbReference>
<dbReference type="InterPro" id="IPR022920">
    <property type="entry name" value="Disulphide_bond_form_DsbB"/>
</dbReference>
<dbReference type="InterPro" id="IPR050183">
    <property type="entry name" value="DsbB"/>
</dbReference>
<dbReference type="InterPro" id="IPR023380">
    <property type="entry name" value="DsbB-like_sf"/>
</dbReference>
<dbReference type="NCBIfam" id="NF002552">
    <property type="entry name" value="PRK02110.1"/>
    <property type="match status" value="1"/>
</dbReference>
<dbReference type="PANTHER" id="PTHR36570">
    <property type="entry name" value="DISULFIDE BOND FORMATION PROTEIN B"/>
    <property type="match status" value="1"/>
</dbReference>
<dbReference type="PANTHER" id="PTHR36570:SF3">
    <property type="entry name" value="DISULFIDE BOND FORMATION PROTEIN B"/>
    <property type="match status" value="1"/>
</dbReference>
<dbReference type="Pfam" id="PF02600">
    <property type="entry name" value="DsbB"/>
    <property type="match status" value="1"/>
</dbReference>
<dbReference type="SUPFAM" id="SSF158442">
    <property type="entry name" value="DsbB-like"/>
    <property type="match status" value="1"/>
</dbReference>
<reference key="1">
    <citation type="journal article" date="2010" name="PLoS ONE">
        <title>The complete genome sequence of Cupriavidus metallidurans strain CH34, a master survivalist in harsh and anthropogenic environments.</title>
        <authorList>
            <person name="Janssen P.J."/>
            <person name="Van Houdt R."/>
            <person name="Moors H."/>
            <person name="Monsieurs P."/>
            <person name="Morin N."/>
            <person name="Michaux A."/>
            <person name="Benotmane M.A."/>
            <person name="Leys N."/>
            <person name="Vallaeys T."/>
            <person name="Lapidus A."/>
            <person name="Monchy S."/>
            <person name="Medigue C."/>
            <person name="Taghavi S."/>
            <person name="McCorkle S."/>
            <person name="Dunn J."/>
            <person name="van der Lelie D."/>
            <person name="Mergeay M."/>
        </authorList>
    </citation>
    <scope>NUCLEOTIDE SEQUENCE [LARGE SCALE GENOMIC DNA]</scope>
    <source>
        <strain>ATCC 43123 / DSM 2839 / NBRC 102507 / CH34</strain>
    </source>
</reference>
<organism>
    <name type="scientific">Cupriavidus metallidurans (strain ATCC 43123 / DSM 2839 / NBRC 102507 / CH34)</name>
    <name type="common">Ralstonia metallidurans</name>
    <dbReference type="NCBI Taxonomy" id="266264"/>
    <lineage>
        <taxon>Bacteria</taxon>
        <taxon>Pseudomonadati</taxon>
        <taxon>Pseudomonadota</taxon>
        <taxon>Betaproteobacteria</taxon>
        <taxon>Burkholderiales</taxon>
        <taxon>Burkholderiaceae</taxon>
        <taxon>Cupriavidus</taxon>
    </lineage>
</organism>
<keyword id="KW-0997">Cell inner membrane</keyword>
<keyword id="KW-1003">Cell membrane</keyword>
<keyword id="KW-0143">Chaperone</keyword>
<keyword id="KW-1015">Disulfide bond</keyword>
<keyword id="KW-0249">Electron transport</keyword>
<keyword id="KW-0472">Membrane</keyword>
<keyword id="KW-0560">Oxidoreductase</keyword>
<keyword id="KW-0676">Redox-active center</keyword>
<keyword id="KW-1185">Reference proteome</keyword>
<keyword id="KW-0812">Transmembrane</keyword>
<keyword id="KW-1133">Transmembrane helix</keyword>
<keyword id="KW-0813">Transport</keyword>
<sequence length="161" mass="17527">MQANSRTYFLLIAIVSFAMVGAALYMQYAENLQPCPLCIMQRFAFIGIGIFSLLAVIAQNTRTLWQGLGMLSGVGGIAVAGYQVALLMNPKASCGIDPLENWVNSLPTAKLLPQVFYSDGLCTAPTPPILGLSIPAWSLIWLLILTLTLAVGLIRREKHFR</sequence>
<comment type="function">
    <text evidence="1">Required for disulfide bond formation in some periplasmic proteins. Acts by oxidizing the DsbA protein.</text>
</comment>
<comment type="subcellular location">
    <subcellularLocation>
        <location evidence="1">Cell inner membrane</location>
        <topology evidence="1">Multi-pass membrane protein</topology>
    </subcellularLocation>
</comment>
<comment type="similarity">
    <text evidence="1">Belongs to the DsbB family.</text>
</comment>
<evidence type="ECO:0000255" key="1">
    <source>
        <dbReference type="HAMAP-Rule" id="MF_00286"/>
    </source>
</evidence>
<name>DSBB_CUPMC</name>
<feature type="chain" id="PRO_0000298401" description="Disulfide bond formation protein B">
    <location>
        <begin position="1"/>
        <end position="161"/>
    </location>
</feature>
<feature type="topological domain" description="Cytoplasmic" evidence="1">
    <location>
        <begin position="1"/>
        <end position="8"/>
    </location>
</feature>
<feature type="transmembrane region" description="Helical" evidence="1">
    <location>
        <begin position="9"/>
        <end position="25"/>
    </location>
</feature>
<feature type="topological domain" description="Periplasmic" evidence="1">
    <location>
        <begin position="26"/>
        <end position="43"/>
    </location>
</feature>
<feature type="transmembrane region" description="Helical" evidence="1">
    <location>
        <begin position="44"/>
        <end position="58"/>
    </location>
</feature>
<feature type="topological domain" description="Cytoplasmic" evidence="1">
    <location>
        <begin position="59"/>
        <end position="63"/>
    </location>
</feature>
<feature type="transmembrane region" description="Helical" evidence="1">
    <location>
        <begin position="64"/>
        <end position="81"/>
    </location>
</feature>
<feature type="topological domain" description="Periplasmic" evidence="1">
    <location>
        <begin position="82"/>
        <end position="136"/>
    </location>
</feature>
<feature type="transmembrane region" description="Helical" evidence="1">
    <location>
        <begin position="137"/>
        <end position="155"/>
    </location>
</feature>
<feature type="topological domain" description="Cytoplasmic" evidence="1">
    <location>
        <begin position="156"/>
        <end position="161"/>
    </location>
</feature>
<feature type="disulfide bond" description="Redox-active" evidence="1">
    <location>
        <begin position="35"/>
        <end position="38"/>
    </location>
</feature>
<feature type="disulfide bond" description="Redox-active" evidence="1">
    <location>
        <begin position="94"/>
        <end position="122"/>
    </location>
</feature>
<proteinExistence type="inferred from homology"/>
<accession>Q1LNJ0</accession>
<gene>
    <name evidence="1" type="primary">dsbB</name>
    <name type="ordered locus">Rmet_1403</name>
</gene>